<proteinExistence type="inferred from homology"/>
<feature type="chain" id="PRO_1000012368" description="UDP-N-acetylmuramyl-tripeptide synthetase">
    <location>
        <begin position="1"/>
        <end position="513"/>
    </location>
</feature>
<feature type="binding site" evidence="1">
    <location>
        <position position="38"/>
    </location>
    <ligand>
        <name>UDP-N-acetyl-alpha-D-muramoyl-L-alanyl-D-glutamate</name>
        <dbReference type="ChEBI" id="CHEBI:83900"/>
    </ligand>
</feature>
<feature type="binding site" evidence="1">
    <location>
        <begin position="115"/>
        <end position="121"/>
    </location>
    <ligand>
        <name>ATP</name>
        <dbReference type="ChEBI" id="CHEBI:30616"/>
    </ligand>
</feature>
<feature type="binding site" evidence="1">
    <location>
        <begin position="161"/>
        <end position="162"/>
    </location>
    <ligand>
        <name>UDP-N-acetyl-alpha-D-muramoyl-L-alanyl-D-glutamate</name>
        <dbReference type="ChEBI" id="CHEBI:83900"/>
    </ligand>
</feature>
<feature type="binding site" evidence="1">
    <location>
        <position position="188"/>
    </location>
    <ligand>
        <name>UDP-N-acetyl-alpha-D-muramoyl-L-alanyl-D-glutamate</name>
        <dbReference type="ChEBI" id="CHEBI:83900"/>
    </ligand>
</feature>
<feature type="binding site" evidence="1">
    <location>
        <position position="196"/>
    </location>
    <ligand>
        <name>UDP-N-acetyl-alpha-D-muramoyl-L-alanyl-D-glutamate</name>
        <dbReference type="ChEBI" id="CHEBI:83900"/>
    </ligand>
</feature>
<feature type="modified residue" description="N6-carboxylysine" evidence="1">
    <location>
        <position position="230"/>
    </location>
</feature>
<dbReference type="EC" id="6.3.2.-" evidence="1"/>
<dbReference type="EMBL" id="CR936503">
    <property type="protein sequence ID" value="CAI54582.1"/>
    <property type="molecule type" value="Genomic_DNA"/>
</dbReference>
<dbReference type="RefSeq" id="WP_011373990.1">
    <property type="nucleotide sequence ID" value="NC_007576.1"/>
</dbReference>
<dbReference type="SMR" id="Q38YZ5"/>
<dbReference type="STRING" id="314315.LCA_0280"/>
<dbReference type="KEGG" id="lsa:LCA_0280"/>
<dbReference type="eggNOG" id="COG0769">
    <property type="taxonomic scope" value="Bacteria"/>
</dbReference>
<dbReference type="HOGENOM" id="CLU_022291_4_2_9"/>
<dbReference type="OrthoDB" id="9800958at2"/>
<dbReference type="UniPathway" id="UPA00219"/>
<dbReference type="Proteomes" id="UP000002707">
    <property type="component" value="Chromosome"/>
</dbReference>
<dbReference type="GO" id="GO:0005737">
    <property type="term" value="C:cytoplasm"/>
    <property type="evidence" value="ECO:0007669"/>
    <property type="project" value="UniProtKB-SubCell"/>
</dbReference>
<dbReference type="GO" id="GO:0016881">
    <property type="term" value="F:acid-amino acid ligase activity"/>
    <property type="evidence" value="ECO:0007669"/>
    <property type="project" value="UniProtKB-UniRule"/>
</dbReference>
<dbReference type="GO" id="GO:0005524">
    <property type="term" value="F:ATP binding"/>
    <property type="evidence" value="ECO:0007669"/>
    <property type="project" value="UniProtKB-UniRule"/>
</dbReference>
<dbReference type="GO" id="GO:0000287">
    <property type="term" value="F:magnesium ion binding"/>
    <property type="evidence" value="ECO:0007669"/>
    <property type="project" value="UniProtKB-UniRule"/>
</dbReference>
<dbReference type="GO" id="GO:0051301">
    <property type="term" value="P:cell division"/>
    <property type="evidence" value="ECO:0007669"/>
    <property type="project" value="UniProtKB-KW"/>
</dbReference>
<dbReference type="GO" id="GO:0071555">
    <property type="term" value="P:cell wall organization"/>
    <property type="evidence" value="ECO:0007669"/>
    <property type="project" value="UniProtKB-KW"/>
</dbReference>
<dbReference type="GO" id="GO:0009252">
    <property type="term" value="P:peptidoglycan biosynthetic process"/>
    <property type="evidence" value="ECO:0007669"/>
    <property type="project" value="UniProtKB-UniRule"/>
</dbReference>
<dbReference type="GO" id="GO:0008360">
    <property type="term" value="P:regulation of cell shape"/>
    <property type="evidence" value="ECO:0007669"/>
    <property type="project" value="UniProtKB-KW"/>
</dbReference>
<dbReference type="Gene3D" id="3.90.190.20">
    <property type="entry name" value="Mur ligase, C-terminal domain"/>
    <property type="match status" value="1"/>
</dbReference>
<dbReference type="Gene3D" id="3.40.1190.10">
    <property type="entry name" value="Mur-like, catalytic domain"/>
    <property type="match status" value="1"/>
</dbReference>
<dbReference type="Gene3D" id="3.40.1390.10">
    <property type="entry name" value="MurE/MurF, N-terminal domain"/>
    <property type="match status" value="1"/>
</dbReference>
<dbReference type="HAMAP" id="MF_00208">
    <property type="entry name" value="MurE"/>
    <property type="match status" value="1"/>
</dbReference>
<dbReference type="InterPro" id="IPR036565">
    <property type="entry name" value="Mur-like_cat_sf"/>
</dbReference>
<dbReference type="InterPro" id="IPR004101">
    <property type="entry name" value="Mur_ligase_C"/>
</dbReference>
<dbReference type="InterPro" id="IPR036615">
    <property type="entry name" value="Mur_ligase_C_dom_sf"/>
</dbReference>
<dbReference type="InterPro" id="IPR013221">
    <property type="entry name" value="Mur_ligase_cen"/>
</dbReference>
<dbReference type="InterPro" id="IPR035911">
    <property type="entry name" value="MurE/MurF_N"/>
</dbReference>
<dbReference type="InterPro" id="IPR005761">
    <property type="entry name" value="UDP-N-AcMur-Glu-dNH2Pim_ligase"/>
</dbReference>
<dbReference type="NCBIfam" id="TIGR01085">
    <property type="entry name" value="murE"/>
    <property type="match status" value="1"/>
</dbReference>
<dbReference type="NCBIfam" id="NF001130">
    <property type="entry name" value="PRK00139.2-4"/>
    <property type="match status" value="1"/>
</dbReference>
<dbReference type="PANTHER" id="PTHR23135">
    <property type="entry name" value="MUR LIGASE FAMILY MEMBER"/>
    <property type="match status" value="1"/>
</dbReference>
<dbReference type="PANTHER" id="PTHR23135:SF4">
    <property type="entry name" value="UDP-N-ACETYLMURAMOYL-L-ALANYL-D-GLUTAMATE--2,6-DIAMINOPIMELATE LIGASE MURE HOMOLOG, CHLOROPLASTIC"/>
    <property type="match status" value="1"/>
</dbReference>
<dbReference type="Pfam" id="PF02875">
    <property type="entry name" value="Mur_ligase_C"/>
    <property type="match status" value="1"/>
</dbReference>
<dbReference type="Pfam" id="PF08245">
    <property type="entry name" value="Mur_ligase_M"/>
    <property type="match status" value="1"/>
</dbReference>
<dbReference type="SUPFAM" id="SSF53623">
    <property type="entry name" value="MurD-like peptide ligases, catalytic domain"/>
    <property type="match status" value="1"/>
</dbReference>
<dbReference type="SUPFAM" id="SSF53244">
    <property type="entry name" value="MurD-like peptide ligases, peptide-binding domain"/>
    <property type="match status" value="1"/>
</dbReference>
<dbReference type="SUPFAM" id="SSF63418">
    <property type="entry name" value="MurE/MurF N-terminal domain"/>
    <property type="match status" value="1"/>
</dbReference>
<name>MURE_LATSS</name>
<organism>
    <name type="scientific">Latilactobacillus sakei subsp. sakei (strain 23K)</name>
    <name type="common">Lactobacillus sakei subsp. sakei</name>
    <dbReference type="NCBI Taxonomy" id="314315"/>
    <lineage>
        <taxon>Bacteria</taxon>
        <taxon>Bacillati</taxon>
        <taxon>Bacillota</taxon>
        <taxon>Bacilli</taxon>
        <taxon>Lactobacillales</taxon>
        <taxon>Lactobacillaceae</taxon>
        <taxon>Latilactobacillus</taxon>
    </lineage>
</organism>
<evidence type="ECO:0000255" key="1">
    <source>
        <dbReference type="HAMAP-Rule" id="MF_00208"/>
    </source>
</evidence>
<protein>
    <recommendedName>
        <fullName evidence="1">UDP-N-acetylmuramyl-tripeptide synthetase</fullName>
        <ecNumber evidence="1">6.3.2.-</ecNumber>
    </recommendedName>
    <alternativeName>
        <fullName evidence="1">UDP-MurNAc-tripeptide synthetase</fullName>
    </alternativeName>
</protein>
<comment type="function">
    <text evidence="1">Catalyzes the addition of an amino acid to the nucleotide precursor UDP-N-acetylmuramoyl-L-alanyl-D-glutamate (UMAG) in the biosynthesis of bacterial cell-wall peptidoglycan.</text>
</comment>
<comment type="pathway">
    <text evidence="1">Cell wall biogenesis; peptidoglycan biosynthesis.</text>
</comment>
<comment type="subcellular location">
    <subcellularLocation>
        <location evidence="1">Cytoplasm</location>
    </subcellularLocation>
</comment>
<comment type="PTM">
    <text evidence="1">Carboxylation is probably crucial for Mg(2+) binding and, consequently, for the gamma-phosphate positioning of ATP.</text>
</comment>
<comment type="similarity">
    <text evidence="1">Belongs to the MurCDEF family. MurE subfamily.</text>
</comment>
<reference key="1">
    <citation type="journal article" date="2005" name="Nat. Biotechnol.">
        <title>The complete genome sequence of the meat-borne lactic acid bacterium Lactobacillus sakei 23K.</title>
        <authorList>
            <person name="Chaillou S."/>
            <person name="Champomier-Verges M.-C."/>
            <person name="Cornet M."/>
            <person name="Crutz-Le Coq A.-M."/>
            <person name="Dudez A.-M."/>
            <person name="Martin V."/>
            <person name="Beaufils S."/>
            <person name="Darbon-Rongere E."/>
            <person name="Bossy R."/>
            <person name="Loux V."/>
            <person name="Zagorec M."/>
        </authorList>
    </citation>
    <scope>NUCLEOTIDE SEQUENCE [LARGE SCALE GENOMIC DNA]</scope>
    <source>
        <strain>23K</strain>
    </source>
</reference>
<keyword id="KW-0067">ATP-binding</keyword>
<keyword id="KW-0131">Cell cycle</keyword>
<keyword id="KW-0132">Cell division</keyword>
<keyword id="KW-0133">Cell shape</keyword>
<keyword id="KW-0961">Cell wall biogenesis/degradation</keyword>
<keyword id="KW-0963">Cytoplasm</keyword>
<keyword id="KW-0436">Ligase</keyword>
<keyword id="KW-0547">Nucleotide-binding</keyword>
<keyword id="KW-0573">Peptidoglycan synthesis</keyword>
<keyword id="KW-1185">Reference proteome</keyword>
<sequence>MALTLDACTLILKEHHLLKSVALNGDSNLNMTGIAYDSRKVTADTLFFCKGNFRPVFLTNAKEAGAVTYVAEQPIVEGNGMNALIVTNVQKAMAVLSAAFYDYPQDDLFIVAYTGTKGKTTASYFTQSILQDATNKKTALFSTIDRVLGPKPEDRFKSDLTTPESLDLFHDMRQAVENGMTHLVMEVSSQAYKKNRVYGLTFDVGFFLNISPDHVGPNEHPNFEDYLHCKLQLLVNSRHCVINAQTQNFGDVYAAATTTTEPENIYLFADTSYQPAQPVNIDFRFENQAMTLAESRFKVTAVSKKAIQLGVSGDYQLRLIGDFNESNATAAIIGAALGGADLIAAQQGIRRLQIPGRMETLAVEGHGQVYVDYAHNYASMKALLSFLQKEYNQPKLLVVVGSPGDKGVSRRAGFAQVLNEYADRAILTTDDPGYEDPATIAAEILAGIDQDKVDTTVEIDRATAIKQAIEESQPGDIVVLAAKGADAYQKVRGVDTPYPTDMVIAKQVAQQLS</sequence>
<gene>
    <name evidence="1" type="primary">murE</name>
    <name type="ordered locus">LCA_0280</name>
</gene>
<accession>Q38YZ5</accession>